<feature type="chain" id="PRO_0000052032" description="Cytochrome P450 52B1">
    <location>
        <begin position="1"/>
        <end position="506"/>
    </location>
</feature>
<feature type="binding site" description="axial binding residue" evidence="1">
    <location>
        <position position="451"/>
    </location>
    <ligand>
        <name>heme</name>
        <dbReference type="ChEBI" id="CHEBI:30413"/>
    </ligand>
    <ligandPart>
        <name>Fe</name>
        <dbReference type="ChEBI" id="CHEBI:18248"/>
    </ligandPart>
</feature>
<accession>P30611</accession>
<keyword id="KW-0349">Heme</keyword>
<keyword id="KW-0408">Iron</keyword>
<keyword id="KW-0479">Metal-binding</keyword>
<keyword id="KW-0503">Monooxygenase</keyword>
<keyword id="KW-0560">Oxidoreductase</keyword>
<proteinExistence type="evidence at transcript level"/>
<gene>
    <name type="primary">CYP52B1</name>
</gene>
<sequence>MSLTETTATFIYNYWYIIFHLYFYTTSKIIKYHHTTYLMIKFKASPPLNYINKGFFGIQATFTELKHLICHTSIDYAIDQFNNVPFPHVHTFVTKVLGNELIMTKDPENIKVLLRFPVFDKFDYGTRSSAVQPSLGMGIFTLEGENWKATRSVLRNMFDRKSIDKVHDFEPHFKTLQKRIDGKVGYFDIQQEFLKLGLELSIEFIFGQVVSEDVPHYDDFTQAWDRCQDYMMLRLLLGDFYWMANDWRYKQSNQIVQAFCDYLVQKSLENTCNDKFVFVHQLAKHTTNKTFIRDQALSLIMASRDTTAELMAFTILELSRKSHHLGKLREEIDANFGLESPDLLTFDSLRKFKYVQAILNETLRMYPGVPRNMKTAKCTTTLPKGGGPDGQDPILVKKGQSVGFISIATHLDPVLNFGSDAHVFRPDRWFDSSMKNLGCKYLPFNAGPRTCLGQQYTLIEASYLLVRLAQTYETVESHPDSVYPPRKKALINMCAADGVDVKFHRL</sequence>
<protein>
    <recommendedName>
        <fullName>Cytochrome P450 52B1</fullName>
        <ecNumber>1.14.14.-</ecNumber>
    </recommendedName>
    <alternativeName>
        <fullName>Alkane-inducible P450-ALK6</fullName>
    </alternativeName>
    <alternativeName>
        <fullName>CYPLIIB1</fullName>
    </alternativeName>
</protein>
<organism>
    <name type="scientific">Candida tropicalis</name>
    <name type="common">Yeast</name>
    <dbReference type="NCBI Taxonomy" id="5482"/>
    <lineage>
        <taxon>Eukaryota</taxon>
        <taxon>Fungi</taxon>
        <taxon>Dikarya</taxon>
        <taxon>Ascomycota</taxon>
        <taxon>Saccharomycotina</taxon>
        <taxon>Pichiomycetes</taxon>
        <taxon>Debaryomycetaceae</taxon>
        <taxon>Candida/Lodderomyces clade</taxon>
        <taxon>Candida</taxon>
    </lineage>
</organism>
<evidence type="ECO:0000250" key="1"/>
<evidence type="ECO:0000305" key="2"/>
<comment type="function">
    <text>Together with an NADPH cytochrome P450 the enzyme system catalyzes the terminal hydroxylation as the first step in the assimilation of alkanes and fatty acids.</text>
</comment>
<comment type="cofactor">
    <cofactor evidence="1">
        <name>heme</name>
        <dbReference type="ChEBI" id="CHEBI:30413"/>
    </cofactor>
</comment>
<comment type="induction">
    <text>By various alkanes.</text>
</comment>
<comment type="similarity">
    <text evidence="2">Belongs to the cytochrome P450 family.</text>
</comment>
<dbReference type="EC" id="1.14.14.-"/>
<dbReference type="EMBL" id="Z13013">
    <property type="protein sequence ID" value="CAA78357.1"/>
    <property type="molecule type" value="Genomic_DNA"/>
</dbReference>
<dbReference type="PIR" id="S22975">
    <property type="entry name" value="S22975"/>
</dbReference>
<dbReference type="SMR" id="P30611"/>
<dbReference type="VEuPathDB" id="FungiDB:CTMYA2_002800"/>
<dbReference type="VEuPathDB" id="FungiDB:CTRG_03114"/>
<dbReference type="GO" id="GO:0020037">
    <property type="term" value="F:heme binding"/>
    <property type="evidence" value="ECO:0007669"/>
    <property type="project" value="InterPro"/>
</dbReference>
<dbReference type="GO" id="GO:0005506">
    <property type="term" value="F:iron ion binding"/>
    <property type="evidence" value="ECO:0007669"/>
    <property type="project" value="InterPro"/>
</dbReference>
<dbReference type="GO" id="GO:0016712">
    <property type="term" value="F:oxidoreductase activity, acting on paired donors, with incorporation or reduction of molecular oxygen, reduced flavin or flavoprotein as one donor, and incorporation of one atom of oxygen"/>
    <property type="evidence" value="ECO:0007669"/>
    <property type="project" value="InterPro"/>
</dbReference>
<dbReference type="CDD" id="cd11063">
    <property type="entry name" value="CYP52"/>
    <property type="match status" value="1"/>
</dbReference>
<dbReference type="Gene3D" id="1.10.630.10">
    <property type="entry name" value="Cytochrome P450"/>
    <property type="match status" value="1"/>
</dbReference>
<dbReference type="InterPro" id="IPR001128">
    <property type="entry name" value="Cyt_P450"/>
</dbReference>
<dbReference type="InterPro" id="IPR017972">
    <property type="entry name" value="Cyt_P450_CS"/>
</dbReference>
<dbReference type="InterPro" id="IPR002974">
    <property type="entry name" value="Cyt_P450_E_CYP52_ascomycetes"/>
</dbReference>
<dbReference type="InterPro" id="IPR047146">
    <property type="entry name" value="Cyt_P450_E_CYP52_fungi"/>
</dbReference>
<dbReference type="InterPro" id="IPR036396">
    <property type="entry name" value="Cyt_P450_sf"/>
</dbReference>
<dbReference type="PANTHER" id="PTHR24287">
    <property type="entry name" value="P450, PUTATIVE (EUROFUNG)-RELATED"/>
    <property type="match status" value="1"/>
</dbReference>
<dbReference type="PANTHER" id="PTHR24287:SF1">
    <property type="entry name" value="P450, PUTATIVE (EUROFUNG)-RELATED"/>
    <property type="match status" value="1"/>
</dbReference>
<dbReference type="Pfam" id="PF00067">
    <property type="entry name" value="p450"/>
    <property type="match status" value="1"/>
</dbReference>
<dbReference type="PRINTS" id="PR01239">
    <property type="entry name" value="EP450IICYP52"/>
</dbReference>
<dbReference type="PRINTS" id="PR00385">
    <property type="entry name" value="P450"/>
</dbReference>
<dbReference type="SUPFAM" id="SSF48264">
    <property type="entry name" value="Cytochrome P450"/>
    <property type="match status" value="1"/>
</dbReference>
<dbReference type="PROSITE" id="PS00086">
    <property type="entry name" value="CYTOCHROME_P450"/>
    <property type="match status" value="1"/>
</dbReference>
<name>CP52N_CANTR</name>
<reference key="1">
    <citation type="journal article" date="1992" name="DNA Cell Biol.">
        <title>Identification and characterization of additional members of the cytochrome P450 multigene family CYP52 of Candida tropicalis.</title>
        <authorList>
            <person name="Seghezzi W."/>
            <person name="Meili C."/>
            <person name="Ruffiner R."/>
            <person name="Kuenzi R."/>
            <person name="Sanglard D."/>
            <person name="Fiechter A."/>
        </authorList>
    </citation>
    <scope>NUCLEOTIDE SEQUENCE [GENOMIC DNA]</scope>
    <source>
        <strain>ATCC 750 / CBS 94 / DSM 11953 / JCM 1541 / NBRC 1400</strain>
    </source>
</reference>